<accession>Q4HVQ9</accession>
<accession>A0A098E1T1</accession>
<accession>A0A0E0SKV5</accession>
<accession>A0A1C3YKP4</accession>
<accession>V6RTF1</accession>
<dbReference type="EC" id="4.2.1.36"/>
<dbReference type="EMBL" id="DS231670">
    <property type="protein sequence ID" value="ESU17803.1"/>
    <property type="molecule type" value="Genomic_DNA"/>
</dbReference>
<dbReference type="EMBL" id="HG970334">
    <property type="protein sequence ID" value="SCB64978.1"/>
    <property type="molecule type" value="Genomic_DNA"/>
</dbReference>
<dbReference type="RefSeq" id="XP_011325425.1">
    <property type="nucleotide sequence ID" value="XM_011327123.1"/>
</dbReference>
<dbReference type="SMR" id="Q4HVQ9"/>
<dbReference type="FunCoup" id="Q4HVQ9">
    <property type="interactions" value="135"/>
</dbReference>
<dbReference type="STRING" id="229533.Q4HVQ9"/>
<dbReference type="GeneID" id="23557826"/>
<dbReference type="KEGG" id="fgr:FGSG_10949"/>
<dbReference type="VEuPathDB" id="FungiDB:FGRAMPH1_01G20869"/>
<dbReference type="eggNOG" id="KOG0453">
    <property type="taxonomic scope" value="Eukaryota"/>
</dbReference>
<dbReference type="HOGENOM" id="CLU_006714_3_1_1"/>
<dbReference type="InParanoid" id="Q4HVQ9"/>
<dbReference type="OrthoDB" id="90149at110618"/>
<dbReference type="UniPathway" id="UPA00033">
    <property type="reaction ID" value="UER01027"/>
</dbReference>
<dbReference type="Proteomes" id="UP000070720">
    <property type="component" value="Chromosome 3"/>
</dbReference>
<dbReference type="GO" id="GO:0005739">
    <property type="term" value="C:mitochondrion"/>
    <property type="evidence" value="ECO:0007669"/>
    <property type="project" value="UniProtKB-SubCell"/>
</dbReference>
<dbReference type="GO" id="GO:0051539">
    <property type="term" value="F:4 iron, 4 sulfur cluster binding"/>
    <property type="evidence" value="ECO:0007669"/>
    <property type="project" value="InterPro"/>
</dbReference>
<dbReference type="GO" id="GO:0004409">
    <property type="term" value="F:homoaconitate hydratase activity"/>
    <property type="evidence" value="ECO:0007669"/>
    <property type="project" value="UniProtKB-EC"/>
</dbReference>
<dbReference type="GO" id="GO:0046872">
    <property type="term" value="F:metal ion binding"/>
    <property type="evidence" value="ECO:0007669"/>
    <property type="project" value="UniProtKB-KW"/>
</dbReference>
<dbReference type="GO" id="GO:0019878">
    <property type="term" value="P:lysine biosynthetic process via aminoadipic acid"/>
    <property type="evidence" value="ECO:0007669"/>
    <property type="project" value="UniProtKB-UniPathway"/>
</dbReference>
<dbReference type="CDD" id="cd01674">
    <property type="entry name" value="Homoaconitase_Swivel"/>
    <property type="match status" value="1"/>
</dbReference>
<dbReference type="FunFam" id="3.30.499.10:FF:000013">
    <property type="entry name" value="Homoaconitase, mitochondrial"/>
    <property type="match status" value="1"/>
</dbReference>
<dbReference type="Gene3D" id="3.30.499.10">
    <property type="entry name" value="Aconitase, domain 3"/>
    <property type="match status" value="2"/>
</dbReference>
<dbReference type="Gene3D" id="3.20.19.10">
    <property type="entry name" value="Aconitase, domain 4"/>
    <property type="match status" value="1"/>
</dbReference>
<dbReference type="InterPro" id="IPR015931">
    <property type="entry name" value="Acnase/IPM_dHydase_lsu_aba_1/3"/>
</dbReference>
<dbReference type="InterPro" id="IPR001030">
    <property type="entry name" value="Acoase/IPM_deHydtase_lsu_aba"/>
</dbReference>
<dbReference type="InterPro" id="IPR015928">
    <property type="entry name" value="Aconitase/3IPM_dehydase_swvl"/>
</dbReference>
<dbReference type="InterPro" id="IPR018136">
    <property type="entry name" value="Aconitase_4Fe-4S_BS"/>
</dbReference>
<dbReference type="InterPro" id="IPR036008">
    <property type="entry name" value="Aconitase_4Fe-4S_dom"/>
</dbReference>
<dbReference type="InterPro" id="IPR000573">
    <property type="entry name" value="AconitaseA/IPMdHydase_ssu_swvl"/>
</dbReference>
<dbReference type="InterPro" id="IPR004418">
    <property type="entry name" value="Homoaconitase_mito"/>
</dbReference>
<dbReference type="InterPro" id="IPR039386">
    <property type="entry name" value="Homoaconitase_swivel"/>
</dbReference>
<dbReference type="InterPro" id="IPR050067">
    <property type="entry name" value="IPM_dehydratase_rel_enz"/>
</dbReference>
<dbReference type="NCBIfam" id="TIGR00139">
    <property type="entry name" value="h_aconitase"/>
    <property type="match status" value="1"/>
</dbReference>
<dbReference type="PANTHER" id="PTHR43822:SF2">
    <property type="entry name" value="HOMOACONITASE, MITOCHONDRIAL"/>
    <property type="match status" value="1"/>
</dbReference>
<dbReference type="PANTHER" id="PTHR43822">
    <property type="entry name" value="HOMOACONITASE, MITOCHONDRIAL-RELATED"/>
    <property type="match status" value="1"/>
</dbReference>
<dbReference type="Pfam" id="PF00330">
    <property type="entry name" value="Aconitase"/>
    <property type="match status" value="1"/>
</dbReference>
<dbReference type="Pfam" id="PF00694">
    <property type="entry name" value="Aconitase_C"/>
    <property type="match status" value="1"/>
</dbReference>
<dbReference type="PRINTS" id="PR00415">
    <property type="entry name" value="ACONITASE"/>
</dbReference>
<dbReference type="SUPFAM" id="SSF53732">
    <property type="entry name" value="Aconitase iron-sulfur domain"/>
    <property type="match status" value="1"/>
</dbReference>
<dbReference type="SUPFAM" id="SSF52016">
    <property type="entry name" value="LeuD/IlvD-like"/>
    <property type="match status" value="1"/>
</dbReference>
<dbReference type="PROSITE" id="PS00450">
    <property type="entry name" value="ACONITASE_1"/>
    <property type="match status" value="1"/>
</dbReference>
<dbReference type="PROSITE" id="PS01244">
    <property type="entry name" value="ACONITASE_2"/>
    <property type="match status" value="1"/>
</dbReference>
<name>LYS4_GIBZE</name>
<keyword id="KW-0028">Amino-acid biosynthesis</keyword>
<keyword id="KW-0408">Iron</keyword>
<keyword id="KW-0411">Iron-sulfur</keyword>
<keyword id="KW-0456">Lyase</keyword>
<keyword id="KW-0457">Lysine biosynthesis</keyword>
<keyword id="KW-0479">Metal-binding</keyword>
<keyword id="KW-0496">Mitochondrion</keyword>
<keyword id="KW-1185">Reference proteome</keyword>
<keyword id="KW-0809">Transit peptide</keyword>
<feature type="transit peptide" description="Mitochondrion" evidence="2">
    <location>
        <begin position="1"/>
        <end position="24"/>
    </location>
</feature>
<feature type="chain" id="PRO_0000247924" description="Homoaconitase, mitochondrial">
    <location>
        <begin position="25"/>
        <end position="776"/>
    </location>
</feature>
<feature type="binding site" evidence="1">
    <location>
        <position position="392"/>
    </location>
    <ligand>
        <name>[4Fe-4S] cluster</name>
        <dbReference type="ChEBI" id="CHEBI:49883"/>
    </ligand>
</feature>
<feature type="binding site" evidence="1">
    <location>
        <position position="459"/>
    </location>
    <ligand>
        <name>[4Fe-4S] cluster</name>
        <dbReference type="ChEBI" id="CHEBI:49883"/>
    </ligand>
</feature>
<feature type="binding site" evidence="1">
    <location>
        <position position="462"/>
    </location>
    <ligand>
        <name>[4Fe-4S] cluster</name>
        <dbReference type="ChEBI" id="CHEBI:49883"/>
    </ligand>
</feature>
<protein>
    <recommendedName>
        <fullName>Homoaconitase, mitochondrial</fullName>
        <ecNumber>4.2.1.36</ecNumber>
    </recommendedName>
    <alternativeName>
        <fullName>Homoaconitate hydratase</fullName>
    </alternativeName>
</protein>
<organism>
    <name type="scientific">Gibberella zeae (strain ATCC MYA-4620 / CBS 123657 / FGSC 9075 / NRRL 31084 / PH-1)</name>
    <name type="common">Wheat head blight fungus</name>
    <name type="synonym">Fusarium graminearum</name>
    <dbReference type="NCBI Taxonomy" id="229533"/>
    <lineage>
        <taxon>Eukaryota</taxon>
        <taxon>Fungi</taxon>
        <taxon>Dikarya</taxon>
        <taxon>Ascomycota</taxon>
        <taxon>Pezizomycotina</taxon>
        <taxon>Sordariomycetes</taxon>
        <taxon>Hypocreomycetidae</taxon>
        <taxon>Hypocreales</taxon>
        <taxon>Nectriaceae</taxon>
        <taxon>Fusarium</taxon>
    </lineage>
</organism>
<evidence type="ECO:0000250" key="1"/>
<evidence type="ECO:0000255" key="2"/>
<evidence type="ECO:0000305" key="3"/>
<proteinExistence type="inferred from homology"/>
<gene>
    <name type="primary">LYS4</name>
    <name type="ORF">FGRAMPH1_01T20869</name>
    <name type="ORF">FGRRES_10949</name>
    <name type="ORF">FGSG_10949</name>
</gene>
<comment type="function">
    <text evidence="1">Catalyzes the reversible hydration of cis-homoaconitate to (2R,3S)-homoisocitrate, a step in the alpha-aminoadipate pathway for lysine biosynthesis.</text>
</comment>
<comment type="catalytic activity">
    <reaction>
        <text>(2R,3S)-homoisocitrate = cis-homoaconitate + H2O</text>
        <dbReference type="Rhea" id="RHEA:15485"/>
        <dbReference type="ChEBI" id="CHEBI:15377"/>
        <dbReference type="ChEBI" id="CHEBI:15404"/>
        <dbReference type="ChEBI" id="CHEBI:58174"/>
        <dbReference type="EC" id="4.2.1.36"/>
    </reaction>
</comment>
<comment type="cofactor">
    <cofactor evidence="1">
        <name>[4Fe-4S] cluster</name>
        <dbReference type="ChEBI" id="CHEBI:49883"/>
    </cofactor>
    <text evidence="1">Binds 1 [4Fe-4S] cluster per subunit.</text>
</comment>
<comment type="pathway">
    <text>Amino-acid biosynthesis; L-lysine biosynthesis via AAA pathway; L-alpha-aminoadipate from 2-oxoglutarate: step 3/5.</text>
</comment>
<comment type="subcellular location">
    <subcellularLocation>
        <location evidence="1">Mitochondrion</location>
    </subcellularLocation>
</comment>
<comment type="similarity">
    <text evidence="3">Belongs to the aconitase/IPM isomerase family.</text>
</comment>
<sequence length="776" mass="83801">MVALRRAVALNAVAIARLQTRALTARTRSLALASSQYRAYKTSSRQHAFHSQLENTPTPSAFQYQKPPTVENPQTLVEKIAQQYAVGLAPGKKIKAGDYIALAPHHCMSHDNTWPIAKKFLDIGASKIHNNRQVVFTLDHDVQNKSEANLKKYSLIHEFAEKHGVIHYPAGRGIGHQIMVEEGYAWPGTVSVASDSHSNMYGGIGCLGTAVVRTDAASIWATGQTWWQVPPVAKVTFTGILPPGVTGKDVIIALCGLFRDDQVLNHAVEFAGGESLPIDDRLTISNMTTEWGALAGVFPVDEMLISWYRGKATTNAMFGGSSKDRINHKRVDELEQNRLEADPNAKYAKELYLNLSTLSPIVAGPNSVKIATPLKNLEAEDIPVNKAYLVSCTNSRASDIAAAARVFREAAKENKDVKIAPGVNFYIAAASLPEQEIAEEAGDWQVLRDAGAQVLPAGCGPCIGLGTGLLEPGEVGISASNRNFKGRMGSTSAKAYLASPEIVAASALKGKIAGPGWYQKPEGVEKVIIGEGSGDYVADKALSIEDALDKLINEADALIAAAETSEGAKEQAASPTAAEGEESLTEILPGFPEKVEGEIVFCDSDNINTDGIYPGKYTYQDNVSVEKMAEVCMENYDTEFGKFAKAGDILVTGFNFGCGSSREQAATALLAKKIPLVVSGSFGNIFSRNSINNALMGVEVPRLVERLRETYKNDTEKPLTRRTGWKLVWDVRRSKVIVTEKDGSSWEQKVGELPANVQEIIARGGLEKWVKAKIDA</sequence>
<reference key="1">
    <citation type="journal article" date="2007" name="Science">
        <title>The Fusarium graminearum genome reveals a link between localized polymorphism and pathogen specialization.</title>
        <authorList>
            <person name="Cuomo C.A."/>
            <person name="Gueldener U."/>
            <person name="Xu J.-R."/>
            <person name="Trail F."/>
            <person name="Turgeon B.G."/>
            <person name="Di Pietro A."/>
            <person name="Walton J.D."/>
            <person name="Ma L.-J."/>
            <person name="Baker S.E."/>
            <person name="Rep M."/>
            <person name="Adam G."/>
            <person name="Antoniw J."/>
            <person name="Baldwin T."/>
            <person name="Calvo S.E."/>
            <person name="Chang Y.-L."/>
            <person name="DeCaprio D."/>
            <person name="Gale L.R."/>
            <person name="Gnerre S."/>
            <person name="Goswami R.S."/>
            <person name="Hammond-Kosack K."/>
            <person name="Harris L.J."/>
            <person name="Hilburn K."/>
            <person name="Kennell J.C."/>
            <person name="Kroken S."/>
            <person name="Magnuson J.K."/>
            <person name="Mannhaupt G."/>
            <person name="Mauceli E.W."/>
            <person name="Mewes H.-W."/>
            <person name="Mitterbauer R."/>
            <person name="Muehlbauer G."/>
            <person name="Muensterkoetter M."/>
            <person name="Nelson D."/>
            <person name="O'Donnell K."/>
            <person name="Ouellet T."/>
            <person name="Qi W."/>
            <person name="Quesneville H."/>
            <person name="Roncero M.I.G."/>
            <person name="Seong K.-Y."/>
            <person name="Tetko I.V."/>
            <person name="Urban M."/>
            <person name="Waalwijk C."/>
            <person name="Ward T.J."/>
            <person name="Yao J."/>
            <person name="Birren B.W."/>
            <person name="Kistler H.C."/>
        </authorList>
    </citation>
    <scope>NUCLEOTIDE SEQUENCE [LARGE SCALE GENOMIC DNA]</scope>
    <source>
        <strain>ATCC MYA-4620 / CBS 123657 / FGSC 9075 / NRRL 31084 / PH-1</strain>
    </source>
</reference>
<reference key="2">
    <citation type="journal article" date="2010" name="Nature">
        <title>Comparative genomics reveals mobile pathogenicity chromosomes in Fusarium.</title>
        <authorList>
            <person name="Ma L.-J."/>
            <person name="van der Does H.C."/>
            <person name="Borkovich K.A."/>
            <person name="Coleman J.J."/>
            <person name="Daboussi M.-J."/>
            <person name="Di Pietro A."/>
            <person name="Dufresne M."/>
            <person name="Freitag M."/>
            <person name="Grabherr M."/>
            <person name="Henrissat B."/>
            <person name="Houterman P.M."/>
            <person name="Kang S."/>
            <person name="Shim W.-B."/>
            <person name="Woloshuk C."/>
            <person name="Xie X."/>
            <person name="Xu J.-R."/>
            <person name="Antoniw J."/>
            <person name="Baker S.E."/>
            <person name="Bluhm B.H."/>
            <person name="Breakspear A."/>
            <person name="Brown D.W."/>
            <person name="Butchko R.A.E."/>
            <person name="Chapman S."/>
            <person name="Coulson R."/>
            <person name="Coutinho P.M."/>
            <person name="Danchin E.G.J."/>
            <person name="Diener A."/>
            <person name="Gale L.R."/>
            <person name="Gardiner D.M."/>
            <person name="Goff S."/>
            <person name="Hammond-Kosack K.E."/>
            <person name="Hilburn K."/>
            <person name="Hua-Van A."/>
            <person name="Jonkers W."/>
            <person name="Kazan K."/>
            <person name="Kodira C.D."/>
            <person name="Koehrsen M."/>
            <person name="Kumar L."/>
            <person name="Lee Y.-H."/>
            <person name="Li L."/>
            <person name="Manners J.M."/>
            <person name="Miranda-Saavedra D."/>
            <person name="Mukherjee M."/>
            <person name="Park G."/>
            <person name="Park J."/>
            <person name="Park S.-Y."/>
            <person name="Proctor R.H."/>
            <person name="Regev A."/>
            <person name="Ruiz-Roldan M.C."/>
            <person name="Sain D."/>
            <person name="Sakthikumar S."/>
            <person name="Sykes S."/>
            <person name="Schwartz D.C."/>
            <person name="Turgeon B.G."/>
            <person name="Wapinski I."/>
            <person name="Yoder O."/>
            <person name="Young S."/>
            <person name="Zeng Q."/>
            <person name="Zhou S."/>
            <person name="Galagan J."/>
            <person name="Cuomo C.A."/>
            <person name="Kistler H.C."/>
            <person name="Rep M."/>
        </authorList>
    </citation>
    <scope>GENOME REANNOTATION</scope>
    <source>
        <strain>ATCC MYA-4620 / CBS 123657 / FGSC 9075 / NRRL 31084 / PH-1</strain>
    </source>
</reference>
<reference key="3">
    <citation type="journal article" date="2015" name="BMC Genomics">
        <title>The completed genome sequence of the pathogenic ascomycete fungus Fusarium graminearum.</title>
        <authorList>
            <person name="King R."/>
            <person name="Urban M."/>
            <person name="Hammond-Kosack M.C.U."/>
            <person name="Hassani-Pak K."/>
            <person name="Hammond-Kosack K.E."/>
        </authorList>
    </citation>
    <scope>NUCLEOTIDE SEQUENCE [LARGE SCALE GENOMIC DNA]</scope>
    <source>
        <strain>ATCC MYA-4620 / CBS 123657 / FGSC 9075 / NRRL 31084 / PH-1</strain>
    </source>
</reference>